<keyword id="KW-0597">Phosphoprotein</keyword>
<keyword id="KW-0677">Repeat</keyword>
<keyword id="KW-0694">RNA-binding</keyword>
<accession>B3NGA1</accession>
<sequence length="582" mass="61101">MHPRYSPAPPPQQQQQMGGPPHQQQGGGGGGGGSMRGPSNAQQLPPQIPRSQNYSNGSSSSAAAAPPTSRSAFPGAPLTASAVALKGALPQRPPAMTSPAAAAAGAALAAGAPYRGAASWTPQGYAPAAAAAAAAVAQQAAYRYTAPLPQPAYAAYTPHTATTPATTTYGQRVPTAASPSNTNSSSSSNTGSQSGTLSTSLSNTTNTNTNMGPNGTVQNQNQQGGEQLSKTNLYIRGLQQGTTDKDLVNMCAQYGTIISTKAILDKTTNKCKGYGFVDFEQPAFAECAVKGLQGKGVQAQMAKQQEQDPTNLYIANLPPHFKETDLEAMLSKYGQVVSTRILRDQQMNSKGVGFARMESREKCEQIIQMFNGNTIPGAKDPLLVKFADGGPKKKNLFKTPDPNARAWRDVSAEGIPVAYDPTMQQNGVSVNVGTPIGVPYSRFSAPQVGGYPVAGSQWIPGYMMTQPITQVDDQTSYSPQYMQMAAAPQLGVTSYKPEAVNQVQPRGISMMVSGDTGVPYGTMMPQLATLQIGNSYISPTYPYYAPPPTIIPTMPMTDSEQASTAASPDEAYTQYPHQAAPK</sequence>
<organism>
    <name type="scientific">Drosophila erecta</name>
    <name type="common">Fruit fly</name>
    <dbReference type="NCBI Taxonomy" id="7220"/>
    <lineage>
        <taxon>Eukaryota</taxon>
        <taxon>Metazoa</taxon>
        <taxon>Ecdysozoa</taxon>
        <taxon>Arthropoda</taxon>
        <taxon>Hexapoda</taxon>
        <taxon>Insecta</taxon>
        <taxon>Pterygota</taxon>
        <taxon>Neoptera</taxon>
        <taxon>Endopterygota</taxon>
        <taxon>Diptera</taxon>
        <taxon>Brachycera</taxon>
        <taxon>Muscomorpha</taxon>
        <taxon>Ephydroidea</taxon>
        <taxon>Drosophilidae</taxon>
        <taxon>Drosophila</taxon>
        <taxon>Sophophora</taxon>
    </lineage>
</organism>
<name>SHEP_DROER</name>
<protein>
    <recommendedName>
        <fullName>Protein alan shepard</fullName>
    </recommendedName>
</protein>
<gene>
    <name evidence="1" type="primary">shep</name>
    <name type="ORF">GG14139</name>
</gene>
<evidence type="ECO:0000250" key="1">
    <source>
        <dbReference type="UniProtKB" id="Q8MSV2"/>
    </source>
</evidence>
<evidence type="ECO:0000255" key="2">
    <source>
        <dbReference type="PROSITE-ProRule" id="PRU00176"/>
    </source>
</evidence>
<evidence type="ECO:0000256" key="3">
    <source>
        <dbReference type="SAM" id="MobiDB-lite"/>
    </source>
</evidence>
<evidence type="ECO:0000312" key="4">
    <source>
        <dbReference type="EMBL" id="EDV51002.1"/>
    </source>
</evidence>
<dbReference type="EMBL" id="CH954178">
    <property type="protein sequence ID" value="EDV51002.1"/>
    <property type="molecule type" value="Genomic_DNA"/>
</dbReference>
<dbReference type="SMR" id="B3NGA1"/>
<dbReference type="EnsemblMetazoa" id="FBtr0134193">
    <property type="protein sequence ID" value="FBpp0132685"/>
    <property type="gene ID" value="FBgn0106400"/>
</dbReference>
<dbReference type="EnsemblMetazoa" id="XM_001971940.3">
    <property type="protein sequence ID" value="XP_001971976.1"/>
    <property type="gene ID" value="LOC6544279"/>
</dbReference>
<dbReference type="GeneID" id="6544279"/>
<dbReference type="KEGG" id="der:6544279"/>
<dbReference type="eggNOG" id="KOG4733">
    <property type="taxonomic scope" value="Eukaryota"/>
</dbReference>
<dbReference type="HOGENOM" id="CLU_016278_1_0_1"/>
<dbReference type="OMA" id="FESPACA"/>
<dbReference type="OrthoDB" id="271725at2759"/>
<dbReference type="PhylomeDB" id="B3NGA1"/>
<dbReference type="Proteomes" id="UP000008711">
    <property type="component" value="Unassembled WGS sequence"/>
</dbReference>
<dbReference type="GO" id="GO:1990904">
    <property type="term" value="C:ribonucleoprotein complex"/>
    <property type="evidence" value="ECO:0007669"/>
    <property type="project" value="InterPro"/>
</dbReference>
<dbReference type="GO" id="GO:0003723">
    <property type="term" value="F:RNA binding"/>
    <property type="evidence" value="ECO:0007669"/>
    <property type="project" value="UniProtKB-KW"/>
</dbReference>
<dbReference type="GO" id="GO:0009629">
    <property type="term" value="P:response to gravity"/>
    <property type="evidence" value="ECO:0000250"/>
    <property type="project" value="UniProtKB"/>
</dbReference>
<dbReference type="CDD" id="cd12243">
    <property type="entry name" value="RRM1_MSSP"/>
    <property type="match status" value="1"/>
</dbReference>
<dbReference type="CDD" id="cd12244">
    <property type="entry name" value="RRM2_MSSP"/>
    <property type="match status" value="1"/>
</dbReference>
<dbReference type="FunFam" id="3.30.70.330:FF:000169">
    <property type="entry name" value="protein alan shepard isoform X4"/>
    <property type="match status" value="1"/>
</dbReference>
<dbReference type="FunFam" id="3.30.70.330:FF:000491">
    <property type="entry name" value="protein alan shepard isoform X6"/>
    <property type="match status" value="1"/>
</dbReference>
<dbReference type="Gene3D" id="3.30.70.330">
    <property type="match status" value="2"/>
</dbReference>
<dbReference type="InterPro" id="IPR002343">
    <property type="entry name" value="Hud_Sxl_RNA"/>
</dbReference>
<dbReference type="InterPro" id="IPR012677">
    <property type="entry name" value="Nucleotide-bd_a/b_plait_sf"/>
</dbReference>
<dbReference type="InterPro" id="IPR035979">
    <property type="entry name" value="RBD_domain_sf"/>
</dbReference>
<dbReference type="InterPro" id="IPR000504">
    <property type="entry name" value="RRM_dom"/>
</dbReference>
<dbReference type="PANTHER" id="PTHR24012">
    <property type="entry name" value="RNA BINDING PROTEIN"/>
    <property type="match status" value="1"/>
</dbReference>
<dbReference type="Pfam" id="PF00076">
    <property type="entry name" value="RRM_1"/>
    <property type="match status" value="2"/>
</dbReference>
<dbReference type="PRINTS" id="PR00961">
    <property type="entry name" value="HUDSXLRNA"/>
</dbReference>
<dbReference type="SMART" id="SM00360">
    <property type="entry name" value="RRM"/>
    <property type="match status" value="2"/>
</dbReference>
<dbReference type="SUPFAM" id="SSF54928">
    <property type="entry name" value="RNA-binding domain, RBD"/>
    <property type="match status" value="2"/>
</dbReference>
<dbReference type="PROSITE" id="PS50102">
    <property type="entry name" value="RRM"/>
    <property type="match status" value="2"/>
</dbReference>
<reference evidence="4" key="1">
    <citation type="journal article" date="2007" name="Nature">
        <title>Evolution of genes and genomes on the Drosophila phylogeny.</title>
        <authorList>
            <consortium name="Drosophila 12 genomes consortium"/>
        </authorList>
    </citation>
    <scope>NUCLEOTIDE SEQUENCE [LARGE SCALE GENOMIC DNA]</scope>
    <source>
        <strain evidence="4">Tucson 14021-0224.01</strain>
    </source>
</reference>
<feature type="chain" id="PRO_0000379497" description="Protein alan shepard">
    <location>
        <begin position="1"/>
        <end position="582"/>
    </location>
</feature>
<feature type="domain" description="RRM 1" evidence="2">
    <location>
        <begin position="231"/>
        <end position="304"/>
    </location>
</feature>
<feature type="domain" description="RRM 2" evidence="2">
    <location>
        <begin position="310"/>
        <end position="389"/>
    </location>
</feature>
<feature type="region of interest" description="Disordered" evidence="3">
    <location>
        <begin position="1"/>
        <end position="73"/>
    </location>
</feature>
<feature type="region of interest" description="Disordered" evidence="3">
    <location>
        <begin position="164"/>
        <end position="225"/>
    </location>
</feature>
<feature type="region of interest" description="Disordered" evidence="3">
    <location>
        <begin position="555"/>
        <end position="582"/>
    </location>
</feature>
<feature type="compositionally biased region" description="Pro residues" evidence="3">
    <location>
        <begin position="1"/>
        <end position="12"/>
    </location>
</feature>
<feature type="compositionally biased region" description="Low complexity" evidence="3">
    <location>
        <begin position="13"/>
        <end position="24"/>
    </location>
</feature>
<feature type="compositionally biased region" description="Gly residues" evidence="3">
    <location>
        <begin position="25"/>
        <end position="35"/>
    </location>
</feature>
<feature type="compositionally biased region" description="Polar residues" evidence="3">
    <location>
        <begin position="37"/>
        <end position="57"/>
    </location>
</feature>
<feature type="compositionally biased region" description="Low complexity" evidence="3">
    <location>
        <begin position="58"/>
        <end position="72"/>
    </location>
</feature>
<feature type="compositionally biased region" description="Low complexity" evidence="3">
    <location>
        <begin position="178"/>
        <end position="225"/>
    </location>
</feature>
<feature type="modified residue" description="Phosphotyrosine" evidence="1">
    <location>
        <position position="5"/>
    </location>
</feature>
<feature type="modified residue" description="Phosphotyrosine" evidence="1">
    <location>
        <position position="125"/>
    </location>
</feature>
<feature type="modified residue" description="Phosphotyrosine" evidence="1">
    <location>
        <position position="142"/>
    </location>
</feature>
<proteinExistence type="inferred from homology"/>
<comment type="function">
    <text evidence="1">Has a role in the perception of gravity.</text>
</comment>
<comment type="miscellaneous">
    <text>Named after Alan Bartlett Shepard, Jr. who was the second person and the first American in space and the fifth person to walk on the moon.</text>
</comment>